<keyword id="KW-0131">Cell cycle</keyword>
<keyword id="KW-0132">Cell division</keyword>
<keyword id="KW-0963">Cytoplasm</keyword>
<keyword id="KW-0597">Phosphoprotein</keyword>
<keyword id="KW-1185">Reference proteome</keyword>
<organism>
    <name type="scientific">Saccharomyces cerevisiae (strain ATCC 204508 / S288c)</name>
    <name type="common">Baker's yeast</name>
    <dbReference type="NCBI Taxonomy" id="559292"/>
    <lineage>
        <taxon>Eukaryota</taxon>
        <taxon>Fungi</taxon>
        <taxon>Dikarya</taxon>
        <taxon>Ascomycota</taxon>
        <taxon>Saccharomycotina</taxon>
        <taxon>Saccharomycetes</taxon>
        <taxon>Saccharomycetales</taxon>
        <taxon>Saccharomycetaceae</taxon>
        <taxon>Saccharomyces</taxon>
    </lineage>
</organism>
<protein>
    <recommendedName>
        <fullName evidence="5">Ataxin-10 homolog</fullName>
    </recommendedName>
    <alternativeName>
        <fullName>Copper transport protein 86</fullName>
    </alternativeName>
</protein>
<gene>
    <name type="primary">CTR86</name>
    <name type="ordered locus">YCR054C</name>
    <name type="ORF">YCR54C</name>
</gene>
<reference key="1">
    <citation type="journal article" date="1990" name="Yeast">
        <title>Analysis of the THR4 region on chromosome III of the yeast Saccharomyces cerevisiae.</title>
        <authorList>
            <person name="Mannhaupt G."/>
            <person name="van der Linden C.G."/>
            <person name="Vetter I."/>
            <person name="Maurer K."/>
            <person name="Pilz U."/>
            <person name="Planta R.J."/>
            <person name="Feldmann H."/>
        </authorList>
    </citation>
    <scope>NUCLEOTIDE SEQUENCE [GENOMIC DNA]</scope>
</reference>
<reference key="2">
    <citation type="journal article" date="1992" name="Nature">
        <title>The complete DNA sequence of yeast chromosome III.</title>
        <authorList>
            <person name="Oliver S.G."/>
            <person name="van der Aart Q.J.M."/>
            <person name="Agostoni-Carbone M.L."/>
            <person name="Aigle M."/>
            <person name="Alberghina L."/>
            <person name="Alexandraki D."/>
            <person name="Antoine G."/>
            <person name="Anwar R."/>
            <person name="Ballesta J.P.G."/>
            <person name="Benit P."/>
            <person name="Berben G."/>
            <person name="Bergantino E."/>
            <person name="Biteau N."/>
            <person name="Bolle P.-A."/>
            <person name="Bolotin-Fukuhara M."/>
            <person name="Brown A."/>
            <person name="Brown A.J.P."/>
            <person name="Buhler J.-M."/>
            <person name="Carcano C."/>
            <person name="Carignani G."/>
            <person name="Cederberg H."/>
            <person name="Chanet R."/>
            <person name="Contreras R."/>
            <person name="Crouzet M."/>
            <person name="Daignan-Fornier B."/>
            <person name="Defoor E."/>
            <person name="Delgado M.D."/>
            <person name="Demolder J."/>
            <person name="Doira C."/>
            <person name="Dubois E."/>
            <person name="Dujon B."/>
            <person name="Duesterhoeft A."/>
            <person name="Erdmann D."/>
            <person name="Esteban M."/>
            <person name="Fabre F."/>
            <person name="Fairhead C."/>
            <person name="Faye G."/>
            <person name="Feldmann H."/>
            <person name="Fiers W."/>
            <person name="Francingues-Gaillard M.-C."/>
            <person name="Franco L."/>
            <person name="Frontali L."/>
            <person name="Fukuhara H."/>
            <person name="Fuller L.J."/>
            <person name="Galland P."/>
            <person name="Gent M.E."/>
            <person name="Gigot D."/>
            <person name="Gilliquet V."/>
            <person name="Glansdorff N."/>
            <person name="Goffeau A."/>
            <person name="Grenson M."/>
            <person name="Grisanti P."/>
            <person name="Grivell L.A."/>
            <person name="de Haan M."/>
            <person name="Haasemann M."/>
            <person name="Hatat D."/>
            <person name="Hoenicka J."/>
            <person name="Hegemann J.H."/>
            <person name="Herbert C.J."/>
            <person name="Hilger F."/>
            <person name="Hohmann S."/>
            <person name="Hollenberg C.P."/>
            <person name="Huse K."/>
            <person name="Iborra F."/>
            <person name="Indge K.J."/>
            <person name="Isono K."/>
            <person name="Jacq C."/>
            <person name="Jacquet M."/>
            <person name="James C.M."/>
            <person name="Jauniaux J.-C."/>
            <person name="Jia Y."/>
            <person name="Jimenez A."/>
            <person name="Kelly A."/>
            <person name="Kleinhans U."/>
            <person name="Kreisl P."/>
            <person name="Lanfranchi G."/>
            <person name="Lewis C."/>
            <person name="van der Linden C.G."/>
            <person name="Lucchini G."/>
            <person name="Lutzenkirchen K."/>
            <person name="Maat M.J."/>
            <person name="Mallet L."/>
            <person name="Mannhaupt G."/>
            <person name="Martegani E."/>
            <person name="Mathieu A."/>
            <person name="Maurer C.T.C."/>
            <person name="McConnell D."/>
            <person name="McKee R.A."/>
            <person name="Messenguy F."/>
            <person name="Mewes H.-W."/>
            <person name="Molemans F."/>
            <person name="Montague M.A."/>
            <person name="Muzi Falconi M."/>
            <person name="Navas L."/>
            <person name="Newlon C.S."/>
            <person name="Noone D."/>
            <person name="Pallier C."/>
            <person name="Panzeri L."/>
            <person name="Pearson B.M."/>
            <person name="Perea J."/>
            <person name="Philippsen P."/>
            <person name="Pierard A."/>
            <person name="Planta R.J."/>
            <person name="Plevani P."/>
            <person name="Poetsch B."/>
            <person name="Pohl F.M."/>
            <person name="Purnelle B."/>
            <person name="Ramezani Rad M."/>
            <person name="Rasmussen S.W."/>
            <person name="Raynal A."/>
            <person name="Remacha M.A."/>
            <person name="Richterich P."/>
            <person name="Roberts A.B."/>
            <person name="Rodriguez F."/>
            <person name="Sanz E."/>
            <person name="Schaaff-Gerstenschlaeger I."/>
            <person name="Scherens B."/>
            <person name="Schweitzer B."/>
            <person name="Shu Y."/>
            <person name="Skala J."/>
            <person name="Slonimski P.P."/>
            <person name="Sor F."/>
            <person name="Soustelle C."/>
            <person name="Spiegelberg R."/>
            <person name="Stateva L.I."/>
            <person name="Steensma H.Y."/>
            <person name="Steiner S."/>
            <person name="Thierry A."/>
            <person name="Thireos G."/>
            <person name="Tzermia M."/>
            <person name="Urrestarazu L.A."/>
            <person name="Valle G."/>
            <person name="Vetter I."/>
            <person name="van Vliet-Reedijk J.C."/>
            <person name="Voet M."/>
            <person name="Volckaert G."/>
            <person name="Vreken P."/>
            <person name="Wang H."/>
            <person name="Warmington J.R."/>
            <person name="von Wettstein D."/>
            <person name="Wicksteed B.L."/>
            <person name="Wilson C."/>
            <person name="Wurst H."/>
            <person name="Xu G."/>
            <person name="Yoshikawa A."/>
            <person name="Zimmermann F.K."/>
            <person name="Sgouros J.G."/>
        </authorList>
    </citation>
    <scope>NUCLEOTIDE SEQUENCE [LARGE SCALE GENOMIC DNA]</scope>
    <source>
        <strain>ATCC 204508 / S288c</strain>
    </source>
</reference>
<reference key="3">
    <citation type="journal article" date="2014" name="G3 (Bethesda)">
        <title>The reference genome sequence of Saccharomyces cerevisiae: Then and now.</title>
        <authorList>
            <person name="Engel S.R."/>
            <person name="Dietrich F.S."/>
            <person name="Fisk D.G."/>
            <person name="Binkley G."/>
            <person name="Balakrishnan R."/>
            <person name="Costanzo M.C."/>
            <person name="Dwight S.S."/>
            <person name="Hitz B.C."/>
            <person name="Karra K."/>
            <person name="Nash R.S."/>
            <person name="Weng S."/>
            <person name="Wong E.D."/>
            <person name="Lloyd P."/>
            <person name="Skrzypek M.S."/>
            <person name="Miyasato S.R."/>
            <person name="Simison M."/>
            <person name="Cherry J.M."/>
        </authorList>
    </citation>
    <scope>GENOME REANNOTATION</scope>
    <source>
        <strain>ATCC 204508 / S288c</strain>
    </source>
</reference>
<reference key="4">
    <citation type="journal article" date="2003" name="Nature">
        <title>Global analysis of protein localization in budding yeast.</title>
        <authorList>
            <person name="Huh W.-K."/>
            <person name="Falvo J.V."/>
            <person name="Gerke L.C."/>
            <person name="Carroll A.S."/>
            <person name="Howson R.W."/>
            <person name="Weissman J.S."/>
            <person name="O'Shea E.K."/>
        </authorList>
    </citation>
    <scope>SUBCELLULAR LOCATION [LARGE SCALE ANALYSIS]</scope>
</reference>
<reference key="5">
    <citation type="journal article" date="2003" name="Nature">
        <title>Global analysis of protein expression in yeast.</title>
        <authorList>
            <person name="Ghaemmaghami S."/>
            <person name="Huh W.-K."/>
            <person name="Bower K."/>
            <person name="Howson R.W."/>
            <person name="Belle A."/>
            <person name="Dephoure N."/>
            <person name="O'Shea E.K."/>
            <person name="Weissman J.S."/>
        </authorList>
    </citation>
    <scope>LEVEL OF PROTEIN EXPRESSION [LARGE SCALE ANALYSIS]</scope>
</reference>
<reference key="6">
    <citation type="journal article" date="2008" name="Mol. Cell. Proteomics">
        <title>A multidimensional chromatography technology for in-depth phosphoproteome analysis.</title>
        <authorList>
            <person name="Albuquerque C.P."/>
            <person name="Smolka M.B."/>
            <person name="Payne S.H."/>
            <person name="Bafna V."/>
            <person name="Eng J."/>
            <person name="Zhou H."/>
        </authorList>
    </citation>
    <scope>PHOSPHORYLATION [LARGE SCALE ANALYSIS] AT THR-433 AND SER-559</scope>
    <scope>IDENTIFICATION BY MASS SPECTROMETRY [LARGE SCALE ANALYSIS]</scope>
</reference>
<reference key="7">
    <citation type="journal article" date="2009" name="Science">
        <title>Global analysis of Cdk1 substrate phosphorylation sites provides insights into evolution.</title>
        <authorList>
            <person name="Holt L.J."/>
            <person name="Tuch B.B."/>
            <person name="Villen J."/>
            <person name="Johnson A.D."/>
            <person name="Gygi S.P."/>
            <person name="Morgan D.O."/>
        </authorList>
    </citation>
    <scope>PHOSPHORYLATION [LARGE SCALE ANALYSIS] AT SER-559</scope>
    <scope>IDENTIFICATION BY MASS SPECTROMETRY [LARGE SCALE ANALYSIS]</scope>
</reference>
<accession>P25355</accession>
<accession>D6VR62</accession>
<dbReference type="EMBL" id="X59720">
    <property type="protein sequence ID" value="CAA42285.1"/>
    <property type="molecule type" value="Genomic_DNA"/>
</dbReference>
<dbReference type="EMBL" id="BK006937">
    <property type="protein sequence ID" value="DAA07531.1"/>
    <property type="molecule type" value="Genomic_DNA"/>
</dbReference>
<dbReference type="PIR" id="S22837">
    <property type="entry name" value="S22837"/>
</dbReference>
<dbReference type="RefSeq" id="NP_009983.1">
    <property type="nucleotide sequence ID" value="NM_001178768.1"/>
</dbReference>
<dbReference type="BioGRID" id="31034">
    <property type="interactions" value="90"/>
</dbReference>
<dbReference type="DIP" id="DIP-2728N"/>
<dbReference type="FunCoup" id="P25355">
    <property type="interactions" value="36"/>
</dbReference>
<dbReference type="IntAct" id="P25355">
    <property type="interactions" value="10"/>
</dbReference>
<dbReference type="MINT" id="P25355"/>
<dbReference type="STRING" id="4932.YCR054C"/>
<dbReference type="iPTMnet" id="P25355"/>
<dbReference type="PaxDb" id="4932-YCR054C"/>
<dbReference type="PeptideAtlas" id="P25355"/>
<dbReference type="EnsemblFungi" id="YCR054C_mRNA">
    <property type="protein sequence ID" value="YCR054C"/>
    <property type="gene ID" value="YCR054C"/>
</dbReference>
<dbReference type="GeneID" id="850421"/>
<dbReference type="KEGG" id="sce:YCR054C"/>
<dbReference type="AGR" id="SGD:S000000650"/>
<dbReference type="SGD" id="S000000650">
    <property type="gene designation" value="CTR86"/>
</dbReference>
<dbReference type="VEuPathDB" id="FungiDB:YCR054C"/>
<dbReference type="eggNOG" id="KOG2676">
    <property type="taxonomic scope" value="Eukaryota"/>
</dbReference>
<dbReference type="GeneTree" id="ENSGT00390000010377"/>
<dbReference type="HOGENOM" id="CLU_043683_0_0_1"/>
<dbReference type="InParanoid" id="P25355"/>
<dbReference type="OMA" id="IKERSIM"/>
<dbReference type="OrthoDB" id="379794at2759"/>
<dbReference type="BioCyc" id="YEAST:G3O-29362-MONOMER"/>
<dbReference type="BioGRID-ORCS" id="850421">
    <property type="hits" value="2 hits in 10 CRISPR screens"/>
</dbReference>
<dbReference type="PRO" id="PR:P25355"/>
<dbReference type="Proteomes" id="UP000002311">
    <property type="component" value="Chromosome III"/>
</dbReference>
<dbReference type="RNAct" id="P25355">
    <property type="molecule type" value="protein"/>
</dbReference>
<dbReference type="GO" id="GO:0005737">
    <property type="term" value="C:cytoplasm"/>
    <property type="evidence" value="ECO:0007005"/>
    <property type="project" value="SGD"/>
</dbReference>
<dbReference type="GO" id="GO:0005829">
    <property type="term" value="C:cytosol"/>
    <property type="evidence" value="ECO:0000318"/>
    <property type="project" value="GO_Central"/>
</dbReference>
<dbReference type="GO" id="GO:0005634">
    <property type="term" value="C:nucleus"/>
    <property type="evidence" value="ECO:0007005"/>
    <property type="project" value="SGD"/>
</dbReference>
<dbReference type="GO" id="GO:0051301">
    <property type="term" value="P:cell division"/>
    <property type="evidence" value="ECO:0007669"/>
    <property type="project" value="UniProtKB-KW"/>
</dbReference>
<dbReference type="GO" id="GO:0032465">
    <property type="term" value="P:regulation of cytokinesis"/>
    <property type="evidence" value="ECO:0000250"/>
    <property type="project" value="UniProtKB"/>
</dbReference>
<dbReference type="Gene3D" id="1.25.10.10">
    <property type="entry name" value="Leucine-rich Repeat Variant"/>
    <property type="match status" value="1"/>
</dbReference>
<dbReference type="InterPro" id="IPR011989">
    <property type="entry name" value="ARM-like"/>
</dbReference>
<dbReference type="InterPro" id="IPR016024">
    <property type="entry name" value="ARM-type_fold"/>
</dbReference>
<dbReference type="InterPro" id="IPR051374">
    <property type="entry name" value="Ataxin-10/CTR86_families"/>
</dbReference>
<dbReference type="InterPro" id="IPR019156">
    <property type="entry name" value="Ataxin-10_domain"/>
</dbReference>
<dbReference type="PANTHER" id="PTHR13255">
    <property type="entry name" value="ATAXIN-10"/>
    <property type="match status" value="1"/>
</dbReference>
<dbReference type="PANTHER" id="PTHR13255:SF0">
    <property type="entry name" value="ATAXIN-10"/>
    <property type="match status" value="1"/>
</dbReference>
<dbReference type="Pfam" id="PF09759">
    <property type="entry name" value="Atx10homo_assoc"/>
    <property type="match status" value="1"/>
</dbReference>
<dbReference type="SUPFAM" id="SSF48371">
    <property type="entry name" value="ARM repeat"/>
    <property type="match status" value="1"/>
</dbReference>
<evidence type="ECO:0000250" key="1">
    <source>
        <dbReference type="UniProtKB" id="Q9UBB4"/>
    </source>
</evidence>
<evidence type="ECO:0000256" key="2">
    <source>
        <dbReference type="SAM" id="MobiDB-lite"/>
    </source>
</evidence>
<evidence type="ECO:0000269" key="3">
    <source>
    </source>
</evidence>
<evidence type="ECO:0000269" key="4">
    <source>
    </source>
</evidence>
<evidence type="ECO:0000305" key="5"/>
<evidence type="ECO:0007744" key="6">
    <source>
    </source>
</evidence>
<evidence type="ECO:0007744" key="7">
    <source>
    </source>
</evidence>
<proteinExistence type="evidence at protein level"/>
<name>ATX10_YEAST</name>
<feature type="chain" id="PRO_0000202572" description="Ataxin-10 homolog">
    <location>
        <begin position="1"/>
        <end position="563"/>
    </location>
</feature>
<feature type="region of interest" description="Disordered" evidence="2">
    <location>
        <begin position="544"/>
        <end position="563"/>
    </location>
</feature>
<feature type="modified residue" description="Phosphothreonine" evidence="6">
    <location>
        <position position="433"/>
    </location>
</feature>
<feature type="modified residue" description="Phosphoserine" evidence="6 7">
    <location>
        <position position="559"/>
    </location>
</feature>
<comment type="function">
    <text evidence="1">May play a role in the regulation of cytokinesis.</text>
</comment>
<comment type="subcellular location">
    <subcellularLocation>
        <location evidence="3">Cytoplasm</location>
    </subcellularLocation>
</comment>
<comment type="miscellaneous">
    <text evidence="4">Present with 8970 molecules/cell in log phase SD medium.</text>
</comment>
<comment type="similarity">
    <text evidence="5">Belongs to the ataxin-10 family.</text>
</comment>
<sequence length="563" mass="65206">MPMNNFLDEFNLFDSIITMMKNDPCCVEDYEPIVENLNRIFQRTFNDEEHRKSMANSQLFWERLRDTLEAMLLPASLNENSSIPYTRTVRGLILMMRNLAAENQEIPQKLLLQNLVIRGFLHATSEYVVDTPLIKHLYIACLTCLFNIQQNYSTVDMTTFPALLQFLQYPYGIKLEDGEEEEHFWLPYLFLFKTYLNNDEFSNEFFRDNDTPQKDYYCVRDRIFFDIVTAKFIQDQENSFLIEKGRNYLDDSKLEITSIDLSVLECISKSLTTASFGKYLNGLEERQPGKFTTLLQILQLVVTSKEDWNTYELTAIMSWCYPILQRLACKDIPAFFNKSCNDYAPSVAIQLHSTLLSCLDIISDLCKFNHVRKFLISYDSVKILVSLLDTFQKNLLRINFLKGNGDTVNEIKITDHEGNKIEDRLLIFNRVNTNESFIRADNFPHCKLVIIEILASLVYAHPEIQDQIRELGGLALILSNCVIDDNDPFIKERSIVCLKFLLKNNAKNQEYVKKMEAQDVVQDDALSKAGFEISVEKGGKVRLVSKEEDPGNENSEIISIDED</sequence>